<organism>
    <name type="scientific">Pyrobaculum arsenaticum (strain DSM 13514 / JCM 11321 / PZ6)</name>
    <dbReference type="NCBI Taxonomy" id="340102"/>
    <lineage>
        <taxon>Archaea</taxon>
        <taxon>Thermoproteota</taxon>
        <taxon>Thermoprotei</taxon>
        <taxon>Thermoproteales</taxon>
        <taxon>Thermoproteaceae</taxon>
        <taxon>Pyrobaculum</taxon>
    </lineage>
</organism>
<gene>
    <name evidence="1" type="primary">eif6</name>
    <name type="ordered locus">Pars_1608</name>
</gene>
<accession>A4WL95</accession>
<comment type="function">
    <text evidence="1">Binds to the 50S ribosomal subunit and prevents its association with the 30S ribosomal subunit to form the 70S initiation complex.</text>
</comment>
<comment type="similarity">
    <text evidence="1">Belongs to the eIF-6 family.</text>
</comment>
<sequence length="220" mass="23469">MFDIVPIRIFGTSSIGVFLATNNSVTFLPPDVPEKIDDIVRNTLRTTVARLTVAKSPLLGIFTVVNDNGVLLPPMVLEEEIRLFKALGLNVEVLNTKYTAISNLILAGNKVALVSPLLEPSVRKVVADVLGVEVIVDTIAGNPLVGSLAVLNSRGVLVAPEATDEDLKKLAEYFKAKTDLGTVNKGKSFLRGGIVVNDHGALVGDETAGPEFMRIQQVLG</sequence>
<dbReference type="EMBL" id="CP000660">
    <property type="protein sequence ID" value="ABP51162.1"/>
    <property type="molecule type" value="Genomic_DNA"/>
</dbReference>
<dbReference type="RefSeq" id="WP_011901069.1">
    <property type="nucleotide sequence ID" value="NC_009376.1"/>
</dbReference>
<dbReference type="SMR" id="A4WL95"/>
<dbReference type="STRING" id="340102.Pars_1608"/>
<dbReference type="GeneID" id="5054171"/>
<dbReference type="KEGG" id="pas:Pars_1608"/>
<dbReference type="HOGENOM" id="CLU_071894_1_0_2"/>
<dbReference type="OrthoDB" id="33582at2157"/>
<dbReference type="PhylomeDB" id="A4WL95"/>
<dbReference type="Proteomes" id="UP000001567">
    <property type="component" value="Chromosome"/>
</dbReference>
<dbReference type="GO" id="GO:0043022">
    <property type="term" value="F:ribosome binding"/>
    <property type="evidence" value="ECO:0007669"/>
    <property type="project" value="InterPro"/>
</dbReference>
<dbReference type="GO" id="GO:0003743">
    <property type="term" value="F:translation initiation factor activity"/>
    <property type="evidence" value="ECO:0007669"/>
    <property type="project" value="UniProtKB-UniRule"/>
</dbReference>
<dbReference type="GO" id="GO:0042256">
    <property type="term" value="P:cytosolic ribosome assembly"/>
    <property type="evidence" value="ECO:0007669"/>
    <property type="project" value="InterPro"/>
</dbReference>
<dbReference type="Gene3D" id="3.75.10.10">
    <property type="entry name" value="L-arginine/glycine Amidinotransferase, Chain A"/>
    <property type="match status" value="1"/>
</dbReference>
<dbReference type="HAMAP" id="MF_00032">
    <property type="entry name" value="eIF_6"/>
    <property type="match status" value="1"/>
</dbReference>
<dbReference type="InterPro" id="IPR002769">
    <property type="entry name" value="eIF6"/>
</dbReference>
<dbReference type="NCBIfam" id="TIGR00323">
    <property type="entry name" value="eIF-6"/>
    <property type="match status" value="1"/>
</dbReference>
<dbReference type="NCBIfam" id="NF003126">
    <property type="entry name" value="PRK04046.1-1"/>
    <property type="match status" value="1"/>
</dbReference>
<dbReference type="PANTHER" id="PTHR10784">
    <property type="entry name" value="TRANSLATION INITIATION FACTOR 6"/>
    <property type="match status" value="1"/>
</dbReference>
<dbReference type="Pfam" id="PF01912">
    <property type="entry name" value="eIF-6"/>
    <property type="match status" value="1"/>
</dbReference>
<dbReference type="PIRSF" id="PIRSF006413">
    <property type="entry name" value="IF-6"/>
    <property type="match status" value="1"/>
</dbReference>
<dbReference type="SMART" id="SM00654">
    <property type="entry name" value="eIF6"/>
    <property type="match status" value="1"/>
</dbReference>
<dbReference type="SUPFAM" id="SSF55909">
    <property type="entry name" value="Pentein"/>
    <property type="match status" value="1"/>
</dbReference>
<keyword id="KW-0396">Initiation factor</keyword>
<keyword id="KW-0648">Protein biosynthesis</keyword>
<evidence type="ECO:0000255" key="1">
    <source>
        <dbReference type="HAMAP-Rule" id="MF_00032"/>
    </source>
</evidence>
<proteinExistence type="inferred from homology"/>
<reference key="1">
    <citation type="submission" date="2007-04" db="EMBL/GenBank/DDBJ databases">
        <title>Complete sequence of Pyrobaculum arsenaticum DSM 13514.</title>
        <authorList>
            <consortium name="US DOE Joint Genome Institute"/>
            <person name="Copeland A."/>
            <person name="Lucas S."/>
            <person name="Lapidus A."/>
            <person name="Barry K."/>
            <person name="Glavina del Rio T."/>
            <person name="Dalin E."/>
            <person name="Tice H."/>
            <person name="Pitluck S."/>
            <person name="Chain P."/>
            <person name="Malfatti S."/>
            <person name="Shin M."/>
            <person name="Vergez L."/>
            <person name="Schmutz J."/>
            <person name="Larimer F."/>
            <person name="Land M."/>
            <person name="Hauser L."/>
            <person name="Kyrpides N."/>
            <person name="Mikhailova N."/>
            <person name="Cozen A.E."/>
            <person name="Fitz-Gibbon S.T."/>
            <person name="House C.H."/>
            <person name="Saltikov C."/>
            <person name="Lowe T.M."/>
            <person name="Richardson P."/>
        </authorList>
    </citation>
    <scope>NUCLEOTIDE SEQUENCE [LARGE SCALE GENOMIC DNA]</scope>
    <source>
        <strain>ATCC 700994 / DSM 13514 / JCM 11321 / PZ6</strain>
    </source>
</reference>
<name>IF6_PYRAR</name>
<feature type="chain" id="PRO_1000002604" description="Translation initiation factor 6">
    <location>
        <begin position="1"/>
        <end position="220"/>
    </location>
</feature>
<protein>
    <recommendedName>
        <fullName evidence="1">Translation initiation factor 6</fullName>
        <shortName evidence="1">aIF-6</shortName>
    </recommendedName>
</protein>